<sequence length="514" mass="55507">MTDKLIIFDTTLRDGEQSPGASMTKEEKIRIAKHLERMKVDVIEAGFAASSNGDFDAIHTIAGLVKDSTICSLARANDKDIQRAADALKPANSARIHTFIATSPLHMEKKLRMTPDQVFEQARLAVRFARKFTDNVEFSPEDGSRSDLDFLCRVLEAVIAEGATTINIADTVGYGVPELYGNLVKTLRERIPNSDKAIFSVHCHNDLGMAVANSLAGVKIGGARQIECTINGLGERAGNTSLEEIVMAVKTRKDYFGLDVGIDTTQIVPTSKLVSQITGFVVQPNKAVVGANAFAHASGIHQDGVLKARDTYEIMRAEDVGWTANKIVLGKLSGRNAFKQRLQELGVSLDSEAELNAAFMRFKDLADRKAEIFDEDIIAIVSEESALAQEQEHFKFVSLSQRSETGEQPQAKVVFAVEGKEVTGEARGNGPVDATFNAIEGEVGSGSELLLYSVNAITTGTQAQGEVTVRLSKSGRIVNGVGTDPDIVAASAKAYISALNKLHSKDDKLNPQRA</sequence>
<comment type="function">
    <text evidence="1">Catalyzes the condensation of the acetyl group of acetyl-CoA with 3-methyl-2-oxobutanoate (2-ketoisovalerate) to form 3-carboxy-3-hydroxy-4-methylpentanoate (2-isopropylmalate).</text>
</comment>
<comment type="catalytic activity">
    <reaction evidence="1">
        <text>3-methyl-2-oxobutanoate + acetyl-CoA + H2O = (2S)-2-isopropylmalate + CoA + H(+)</text>
        <dbReference type="Rhea" id="RHEA:21524"/>
        <dbReference type="ChEBI" id="CHEBI:1178"/>
        <dbReference type="ChEBI" id="CHEBI:11851"/>
        <dbReference type="ChEBI" id="CHEBI:15377"/>
        <dbReference type="ChEBI" id="CHEBI:15378"/>
        <dbReference type="ChEBI" id="CHEBI:57287"/>
        <dbReference type="ChEBI" id="CHEBI:57288"/>
        <dbReference type="EC" id="2.3.3.13"/>
    </reaction>
</comment>
<comment type="cofactor">
    <cofactor evidence="1">
        <name>Mn(2+)</name>
        <dbReference type="ChEBI" id="CHEBI:29035"/>
    </cofactor>
</comment>
<comment type="pathway">
    <text evidence="1">Amino-acid biosynthesis; L-leucine biosynthesis; L-leucine from 3-methyl-2-oxobutanoate: step 1/4.</text>
</comment>
<comment type="subunit">
    <text evidence="1">Homodimer.</text>
</comment>
<comment type="subcellular location">
    <subcellularLocation>
        <location evidence="1">Cytoplasm</location>
    </subcellularLocation>
</comment>
<comment type="similarity">
    <text evidence="1">Belongs to the alpha-IPM synthase/homocitrate synthase family. LeuA type 1 subfamily.</text>
</comment>
<protein>
    <recommendedName>
        <fullName evidence="1">2-isopropylmalate synthase</fullName>
        <ecNumber evidence="1">2.3.3.13</ecNumber>
    </recommendedName>
    <alternativeName>
        <fullName evidence="1">Alpha-IPM synthase</fullName>
    </alternativeName>
    <alternativeName>
        <fullName evidence="1">Alpha-isopropylmalate synthase</fullName>
    </alternativeName>
</protein>
<feature type="chain" id="PRO_1000149147" description="2-isopropylmalate synthase">
    <location>
        <begin position="1"/>
        <end position="514"/>
    </location>
</feature>
<feature type="domain" description="Pyruvate carboxyltransferase" evidence="1">
    <location>
        <begin position="5"/>
        <end position="268"/>
    </location>
</feature>
<feature type="region of interest" description="Regulatory domain" evidence="1">
    <location>
        <begin position="395"/>
        <end position="514"/>
    </location>
</feature>
<feature type="binding site" evidence="1">
    <location>
        <position position="14"/>
    </location>
    <ligand>
        <name>Mn(2+)</name>
        <dbReference type="ChEBI" id="CHEBI:29035"/>
    </ligand>
</feature>
<feature type="binding site" evidence="1">
    <location>
        <position position="202"/>
    </location>
    <ligand>
        <name>Mn(2+)</name>
        <dbReference type="ChEBI" id="CHEBI:29035"/>
    </ligand>
</feature>
<feature type="binding site" evidence="1">
    <location>
        <position position="204"/>
    </location>
    <ligand>
        <name>Mn(2+)</name>
        <dbReference type="ChEBI" id="CHEBI:29035"/>
    </ligand>
</feature>
<feature type="binding site" evidence="1">
    <location>
        <position position="239"/>
    </location>
    <ligand>
        <name>Mn(2+)</name>
        <dbReference type="ChEBI" id="CHEBI:29035"/>
    </ligand>
</feature>
<proteinExistence type="inferred from homology"/>
<name>LEU1_BURCH</name>
<accession>A0K933</accession>
<evidence type="ECO:0000255" key="1">
    <source>
        <dbReference type="HAMAP-Rule" id="MF_01025"/>
    </source>
</evidence>
<keyword id="KW-0028">Amino-acid biosynthesis</keyword>
<keyword id="KW-0100">Branched-chain amino acid biosynthesis</keyword>
<keyword id="KW-0963">Cytoplasm</keyword>
<keyword id="KW-0432">Leucine biosynthesis</keyword>
<keyword id="KW-0464">Manganese</keyword>
<keyword id="KW-0479">Metal-binding</keyword>
<keyword id="KW-0808">Transferase</keyword>
<organism>
    <name type="scientific">Burkholderia cenocepacia (strain HI2424)</name>
    <dbReference type="NCBI Taxonomy" id="331272"/>
    <lineage>
        <taxon>Bacteria</taxon>
        <taxon>Pseudomonadati</taxon>
        <taxon>Pseudomonadota</taxon>
        <taxon>Betaproteobacteria</taxon>
        <taxon>Burkholderiales</taxon>
        <taxon>Burkholderiaceae</taxon>
        <taxon>Burkholderia</taxon>
        <taxon>Burkholderia cepacia complex</taxon>
    </lineage>
</organism>
<dbReference type="EC" id="2.3.3.13" evidence="1"/>
<dbReference type="EMBL" id="CP000458">
    <property type="protein sequence ID" value="ABK09010.1"/>
    <property type="molecule type" value="Genomic_DNA"/>
</dbReference>
<dbReference type="RefSeq" id="WP_011545821.1">
    <property type="nucleotide sequence ID" value="NC_008542.1"/>
</dbReference>
<dbReference type="SMR" id="A0K933"/>
<dbReference type="KEGG" id="bch:Bcen2424_2259"/>
<dbReference type="HOGENOM" id="CLU_022158_0_1_4"/>
<dbReference type="UniPathway" id="UPA00048">
    <property type="reaction ID" value="UER00070"/>
</dbReference>
<dbReference type="GO" id="GO:0005829">
    <property type="term" value="C:cytosol"/>
    <property type="evidence" value="ECO:0007669"/>
    <property type="project" value="TreeGrafter"/>
</dbReference>
<dbReference type="GO" id="GO:0003852">
    <property type="term" value="F:2-isopropylmalate synthase activity"/>
    <property type="evidence" value="ECO:0007669"/>
    <property type="project" value="UniProtKB-UniRule"/>
</dbReference>
<dbReference type="GO" id="GO:0003985">
    <property type="term" value="F:acetyl-CoA C-acetyltransferase activity"/>
    <property type="evidence" value="ECO:0007669"/>
    <property type="project" value="UniProtKB-UniRule"/>
</dbReference>
<dbReference type="GO" id="GO:0030145">
    <property type="term" value="F:manganese ion binding"/>
    <property type="evidence" value="ECO:0007669"/>
    <property type="project" value="UniProtKB-UniRule"/>
</dbReference>
<dbReference type="GO" id="GO:0009098">
    <property type="term" value="P:L-leucine biosynthetic process"/>
    <property type="evidence" value="ECO:0007669"/>
    <property type="project" value="UniProtKB-UniRule"/>
</dbReference>
<dbReference type="CDD" id="cd07940">
    <property type="entry name" value="DRE_TIM_IPMS"/>
    <property type="match status" value="1"/>
</dbReference>
<dbReference type="FunFam" id="1.10.238.260:FF:000001">
    <property type="entry name" value="2-isopropylmalate synthase"/>
    <property type="match status" value="1"/>
</dbReference>
<dbReference type="FunFam" id="3.20.20.70:FF:000010">
    <property type="entry name" value="2-isopropylmalate synthase"/>
    <property type="match status" value="1"/>
</dbReference>
<dbReference type="FunFam" id="3.30.160.270:FF:000003">
    <property type="entry name" value="2-isopropylmalate synthase"/>
    <property type="match status" value="1"/>
</dbReference>
<dbReference type="Gene3D" id="1.10.238.260">
    <property type="match status" value="1"/>
</dbReference>
<dbReference type="Gene3D" id="3.30.160.270">
    <property type="match status" value="1"/>
</dbReference>
<dbReference type="Gene3D" id="3.20.20.70">
    <property type="entry name" value="Aldolase class I"/>
    <property type="match status" value="1"/>
</dbReference>
<dbReference type="HAMAP" id="MF_01025">
    <property type="entry name" value="LeuA_type1"/>
    <property type="match status" value="1"/>
</dbReference>
<dbReference type="InterPro" id="IPR050073">
    <property type="entry name" value="2-IPM_HCS-like"/>
</dbReference>
<dbReference type="InterPro" id="IPR013709">
    <property type="entry name" value="2-isopropylmalate_synth_dimer"/>
</dbReference>
<dbReference type="InterPro" id="IPR002034">
    <property type="entry name" value="AIPM/Hcit_synth_CS"/>
</dbReference>
<dbReference type="InterPro" id="IPR013785">
    <property type="entry name" value="Aldolase_TIM"/>
</dbReference>
<dbReference type="InterPro" id="IPR054691">
    <property type="entry name" value="LeuA/HCS_post-cat"/>
</dbReference>
<dbReference type="InterPro" id="IPR036230">
    <property type="entry name" value="LeuA_allosteric_dom_sf"/>
</dbReference>
<dbReference type="InterPro" id="IPR005671">
    <property type="entry name" value="LeuA_bact_synth"/>
</dbReference>
<dbReference type="InterPro" id="IPR000891">
    <property type="entry name" value="PYR_CT"/>
</dbReference>
<dbReference type="NCBIfam" id="TIGR00973">
    <property type="entry name" value="leuA_bact"/>
    <property type="match status" value="1"/>
</dbReference>
<dbReference type="NCBIfam" id="NF002086">
    <property type="entry name" value="PRK00915.1-3"/>
    <property type="match status" value="1"/>
</dbReference>
<dbReference type="NCBIfam" id="NF002087">
    <property type="entry name" value="PRK00915.1-4"/>
    <property type="match status" value="1"/>
</dbReference>
<dbReference type="PANTHER" id="PTHR10277:SF9">
    <property type="entry name" value="2-ISOPROPYLMALATE SYNTHASE 1, CHLOROPLASTIC-RELATED"/>
    <property type="match status" value="1"/>
</dbReference>
<dbReference type="PANTHER" id="PTHR10277">
    <property type="entry name" value="HOMOCITRATE SYNTHASE-RELATED"/>
    <property type="match status" value="1"/>
</dbReference>
<dbReference type="Pfam" id="PF22617">
    <property type="entry name" value="HCS_D2"/>
    <property type="match status" value="1"/>
</dbReference>
<dbReference type="Pfam" id="PF00682">
    <property type="entry name" value="HMGL-like"/>
    <property type="match status" value="1"/>
</dbReference>
<dbReference type="Pfam" id="PF08502">
    <property type="entry name" value="LeuA_dimer"/>
    <property type="match status" value="1"/>
</dbReference>
<dbReference type="SMART" id="SM00917">
    <property type="entry name" value="LeuA_dimer"/>
    <property type="match status" value="1"/>
</dbReference>
<dbReference type="SUPFAM" id="SSF110921">
    <property type="entry name" value="2-isopropylmalate synthase LeuA, allosteric (dimerisation) domain"/>
    <property type="match status" value="1"/>
</dbReference>
<dbReference type="SUPFAM" id="SSF51569">
    <property type="entry name" value="Aldolase"/>
    <property type="match status" value="1"/>
</dbReference>
<dbReference type="PROSITE" id="PS00815">
    <property type="entry name" value="AIPM_HOMOCIT_SYNTH_1"/>
    <property type="match status" value="1"/>
</dbReference>
<dbReference type="PROSITE" id="PS00816">
    <property type="entry name" value="AIPM_HOMOCIT_SYNTH_2"/>
    <property type="match status" value="1"/>
</dbReference>
<dbReference type="PROSITE" id="PS50991">
    <property type="entry name" value="PYR_CT"/>
    <property type="match status" value="1"/>
</dbReference>
<gene>
    <name evidence="1" type="primary">leuA</name>
    <name type="ordered locus">Bcen2424_2259</name>
</gene>
<reference key="1">
    <citation type="submission" date="2006-08" db="EMBL/GenBank/DDBJ databases">
        <title>Complete sequence of chromosome 1 of Burkholderia cenocepacia HI2424.</title>
        <authorList>
            <person name="Copeland A."/>
            <person name="Lucas S."/>
            <person name="Lapidus A."/>
            <person name="Barry K."/>
            <person name="Detter J.C."/>
            <person name="Glavina del Rio T."/>
            <person name="Hammon N."/>
            <person name="Israni S."/>
            <person name="Pitluck S."/>
            <person name="Chain P."/>
            <person name="Malfatti S."/>
            <person name="Shin M."/>
            <person name="Vergez L."/>
            <person name="Schmutz J."/>
            <person name="Larimer F."/>
            <person name="Land M."/>
            <person name="Hauser L."/>
            <person name="Kyrpides N."/>
            <person name="Kim E."/>
            <person name="LiPuma J.J."/>
            <person name="Gonzalez C.F."/>
            <person name="Konstantinidis K."/>
            <person name="Tiedje J.M."/>
            <person name="Richardson P."/>
        </authorList>
    </citation>
    <scope>NUCLEOTIDE SEQUENCE [LARGE SCALE GENOMIC DNA]</scope>
    <source>
        <strain>HI2424</strain>
    </source>
</reference>